<gene>
    <name type="ordered locus">Mthe_0366</name>
</gene>
<dbReference type="EMBL" id="CP000477">
    <property type="protein sequence ID" value="ABK14159.1"/>
    <property type="molecule type" value="Genomic_DNA"/>
</dbReference>
<dbReference type="RefSeq" id="WP_011695557.1">
    <property type="nucleotide sequence ID" value="NC_008553.1"/>
</dbReference>
<dbReference type="SMR" id="A0B635"/>
<dbReference type="STRING" id="349307.Mthe_0366"/>
<dbReference type="GeneID" id="4462700"/>
<dbReference type="KEGG" id="mtp:Mthe_0366"/>
<dbReference type="HOGENOM" id="CLU_082805_6_1_2"/>
<dbReference type="OrthoDB" id="11182at2157"/>
<dbReference type="Proteomes" id="UP000000674">
    <property type="component" value="Chromosome"/>
</dbReference>
<dbReference type="GO" id="GO:0003729">
    <property type="term" value="F:mRNA binding"/>
    <property type="evidence" value="ECO:0007669"/>
    <property type="project" value="TreeGrafter"/>
</dbReference>
<dbReference type="GO" id="GO:0003743">
    <property type="term" value="F:translation initiation factor activity"/>
    <property type="evidence" value="ECO:0007669"/>
    <property type="project" value="InterPro"/>
</dbReference>
<dbReference type="GO" id="GO:0001731">
    <property type="term" value="P:formation of translation preinitiation complex"/>
    <property type="evidence" value="ECO:0007669"/>
    <property type="project" value="TreeGrafter"/>
</dbReference>
<dbReference type="GO" id="GO:0006417">
    <property type="term" value="P:regulation of translation"/>
    <property type="evidence" value="ECO:0007669"/>
    <property type="project" value="UniProtKB-UniRule"/>
</dbReference>
<dbReference type="GO" id="GO:0002188">
    <property type="term" value="P:translation reinitiation"/>
    <property type="evidence" value="ECO:0007669"/>
    <property type="project" value="TreeGrafter"/>
</dbReference>
<dbReference type="CDD" id="cd11567">
    <property type="entry name" value="YciH_like"/>
    <property type="match status" value="1"/>
</dbReference>
<dbReference type="FunFam" id="3.30.780.10:FF:000006">
    <property type="entry name" value="Protein translation factor SUI1 homolog"/>
    <property type="match status" value="1"/>
</dbReference>
<dbReference type="Gene3D" id="3.30.780.10">
    <property type="entry name" value="SUI1-like domain"/>
    <property type="match status" value="1"/>
</dbReference>
<dbReference type="HAMAP" id="MF_00604">
    <property type="entry name" value="SUI1"/>
    <property type="match status" value="1"/>
</dbReference>
<dbReference type="InterPro" id="IPR050318">
    <property type="entry name" value="DENR/SUI1_TIF"/>
</dbReference>
<dbReference type="InterPro" id="IPR001950">
    <property type="entry name" value="SUI1"/>
</dbReference>
<dbReference type="InterPro" id="IPR022851">
    <property type="entry name" value="SUI1_arc"/>
</dbReference>
<dbReference type="InterPro" id="IPR005872">
    <property type="entry name" value="SUI1_arc_bac"/>
</dbReference>
<dbReference type="InterPro" id="IPR036877">
    <property type="entry name" value="SUI1_dom_sf"/>
</dbReference>
<dbReference type="NCBIfam" id="NF002096">
    <property type="entry name" value="PRK00939.1"/>
    <property type="match status" value="1"/>
</dbReference>
<dbReference type="NCBIfam" id="TIGR01158">
    <property type="entry name" value="SUI1_rel"/>
    <property type="match status" value="1"/>
</dbReference>
<dbReference type="PANTHER" id="PTHR12789:SF0">
    <property type="entry name" value="DENSITY-REGULATED PROTEIN"/>
    <property type="match status" value="1"/>
</dbReference>
<dbReference type="PANTHER" id="PTHR12789">
    <property type="entry name" value="DENSITY-REGULATED PROTEIN HOMOLOG"/>
    <property type="match status" value="1"/>
</dbReference>
<dbReference type="Pfam" id="PF01253">
    <property type="entry name" value="SUI1"/>
    <property type="match status" value="1"/>
</dbReference>
<dbReference type="PIRSF" id="PIRSF037511">
    <property type="entry name" value="Transl_init_SUI1_pro"/>
    <property type="match status" value="1"/>
</dbReference>
<dbReference type="SUPFAM" id="SSF55159">
    <property type="entry name" value="eIF1-like"/>
    <property type="match status" value="1"/>
</dbReference>
<dbReference type="PROSITE" id="PS50296">
    <property type="entry name" value="SUI1"/>
    <property type="match status" value="1"/>
</dbReference>
<organism>
    <name type="scientific">Methanothrix thermoacetophila (strain DSM 6194 / JCM 14653 / NBRC 101360 / PT)</name>
    <name type="common">Methanosaeta thermophila</name>
    <dbReference type="NCBI Taxonomy" id="349307"/>
    <lineage>
        <taxon>Archaea</taxon>
        <taxon>Methanobacteriati</taxon>
        <taxon>Methanobacteriota</taxon>
        <taxon>Stenosarchaea group</taxon>
        <taxon>Methanomicrobia</taxon>
        <taxon>Methanotrichales</taxon>
        <taxon>Methanotrichaceae</taxon>
        <taxon>Methanothrix</taxon>
    </lineage>
</organism>
<protein>
    <recommendedName>
        <fullName evidence="1">Protein translation factor SUI1 homolog</fullName>
    </recommendedName>
</protein>
<sequence>MSSEMCTVCGLPKELCICEEVAKEQQRIVVKIHKRRYGKEVTVIQGIDPHEIDLQDLCTYLKSKLACGGTVKDGVIELQGNHIGRIKDLLSKKGFSASQISL</sequence>
<evidence type="ECO:0000255" key="1">
    <source>
        <dbReference type="HAMAP-Rule" id="MF_00604"/>
    </source>
</evidence>
<proteinExistence type="inferred from homology"/>
<reference key="1">
    <citation type="submission" date="2006-10" db="EMBL/GenBank/DDBJ databases">
        <title>Complete sequence of Methanosaeta thermophila PT.</title>
        <authorList>
            <consortium name="US DOE Joint Genome Institute"/>
            <person name="Copeland A."/>
            <person name="Lucas S."/>
            <person name="Lapidus A."/>
            <person name="Barry K."/>
            <person name="Detter J.C."/>
            <person name="Glavina del Rio T."/>
            <person name="Hammon N."/>
            <person name="Israni S."/>
            <person name="Pitluck S."/>
            <person name="Chain P."/>
            <person name="Malfatti S."/>
            <person name="Shin M."/>
            <person name="Vergez L."/>
            <person name="Schmutz J."/>
            <person name="Larimer F."/>
            <person name="Land M."/>
            <person name="Hauser L."/>
            <person name="Kyrpides N."/>
            <person name="Kim E."/>
            <person name="Smith K.S."/>
            <person name="Ingram-Smith C."/>
            <person name="Richardson P."/>
        </authorList>
    </citation>
    <scope>NUCLEOTIDE SEQUENCE [LARGE SCALE GENOMIC DNA]</scope>
    <source>
        <strain>DSM 6194 / JCM 14653 / NBRC 101360 / PT</strain>
    </source>
</reference>
<feature type="chain" id="PRO_1000006439" description="Protein translation factor SUI1 homolog">
    <location>
        <begin position="1"/>
        <end position="102"/>
    </location>
</feature>
<keyword id="KW-0648">Protein biosynthesis</keyword>
<keyword id="KW-1185">Reference proteome</keyword>
<keyword id="KW-0810">Translation regulation</keyword>
<name>SUI1_METTP</name>
<comment type="similarity">
    <text evidence="1">Belongs to the SUI1 family.</text>
</comment>
<accession>A0B635</accession>